<gene>
    <name evidence="1" type="primary">dapA2</name>
    <name type="ordered locus">CA_C3600</name>
</gene>
<keyword id="KW-0028">Amino-acid biosynthesis</keyword>
<keyword id="KW-0963">Cytoplasm</keyword>
<keyword id="KW-0220">Diaminopimelate biosynthesis</keyword>
<keyword id="KW-0456">Lyase</keyword>
<keyword id="KW-0457">Lysine biosynthesis</keyword>
<keyword id="KW-1185">Reference proteome</keyword>
<keyword id="KW-0704">Schiff base</keyword>
<comment type="function">
    <text evidence="1">Catalyzes the condensation of (S)-aspartate-beta-semialdehyde [(S)-ASA] and pyruvate to 4-hydroxy-tetrahydrodipicolinate (HTPA).</text>
</comment>
<comment type="catalytic activity">
    <reaction evidence="1">
        <text>L-aspartate 4-semialdehyde + pyruvate = (2S,4S)-4-hydroxy-2,3,4,5-tetrahydrodipicolinate + H2O + H(+)</text>
        <dbReference type="Rhea" id="RHEA:34171"/>
        <dbReference type="ChEBI" id="CHEBI:15361"/>
        <dbReference type="ChEBI" id="CHEBI:15377"/>
        <dbReference type="ChEBI" id="CHEBI:15378"/>
        <dbReference type="ChEBI" id="CHEBI:67139"/>
        <dbReference type="ChEBI" id="CHEBI:537519"/>
        <dbReference type="EC" id="4.3.3.7"/>
    </reaction>
</comment>
<comment type="pathway">
    <text evidence="1">Amino-acid biosynthesis; L-lysine biosynthesis via DAP pathway; (S)-tetrahydrodipicolinate from L-aspartate: step 3/4.</text>
</comment>
<comment type="subunit">
    <text evidence="1">Homotetramer; dimer of dimers.</text>
</comment>
<comment type="subcellular location">
    <subcellularLocation>
        <location evidence="1">Cytoplasm</location>
    </subcellularLocation>
</comment>
<comment type="similarity">
    <text evidence="1">Belongs to the DapA family.</text>
</comment>
<comment type="caution">
    <text evidence="2">Was originally thought to be a dihydrodipicolinate synthase (DHDPS), catalyzing the condensation of (S)-aspartate-beta-semialdehyde [(S)-ASA] and pyruvate to dihydrodipicolinate (DHDP). However, it was shown in E.coli that the product of the enzymatic reaction is not dihydrodipicolinate but in fact (4S)-4-hydroxy-2,3,4,5-tetrahydro-(2S)-dipicolinic acid (HTPA), and that the consecutive dehydration reaction leading to DHDP is not spontaneous but catalyzed by DapB.</text>
</comment>
<sequence>MKIEGVLIPLITPFKDGKVDLASYEKLIRHYSKKGVAGFMPLATTGETPTLSDYEYQSILEKTVECNELNLPIYVGFGGNNTEKMTKDIKMLDKYNIKGILSVCPYYNRPDQRGIYEHFKRISESTSLDIVLYNIPYRTGRNIENDTIRRLSELDNIVGVKDACGDFTQTTELLLNRPDNFSILTGEDAFFYSTLMLGGDGGIMASAHLNTEKYVEVFNKSKQNDYKSALEIWKQVANMIPLLFEEPNPAPIKYCLSKTGVIASEALRLPLVPISENLKEKLNKFL</sequence>
<reference key="1">
    <citation type="journal article" date="2001" name="J. Bacteriol.">
        <title>Genome sequence and comparative analysis of the solvent-producing bacterium Clostridium acetobutylicum.</title>
        <authorList>
            <person name="Noelling J."/>
            <person name="Breton G."/>
            <person name="Omelchenko M.V."/>
            <person name="Makarova K.S."/>
            <person name="Zeng Q."/>
            <person name="Gibson R."/>
            <person name="Lee H.M."/>
            <person name="Dubois J."/>
            <person name="Qiu D."/>
            <person name="Hitti J."/>
            <person name="Wolf Y.I."/>
            <person name="Tatusov R.L."/>
            <person name="Sabathe F."/>
            <person name="Doucette-Stamm L.A."/>
            <person name="Soucaille P."/>
            <person name="Daly M.J."/>
            <person name="Bennett G.N."/>
            <person name="Koonin E.V."/>
            <person name="Smith D.R."/>
        </authorList>
    </citation>
    <scope>NUCLEOTIDE SEQUENCE [LARGE SCALE GENOMIC DNA]</scope>
    <source>
        <strain>ATCC 824 / DSM 792 / JCM 1419 / IAM 19013 / LMG 5710 / NBRC 13948 / NRRL B-527 / VKM B-1787 / 2291 / W</strain>
    </source>
</reference>
<name>DAPA2_CLOAB</name>
<dbReference type="EC" id="4.3.3.7" evidence="1"/>
<dbReference type="EMBL" id="AE001437">
    <property type="protein sequence ID" value="AAK81523.1"/>
    <property type="molecule type" value="Genomic_DNA"/>
</dbReference>
<dbReference type="PIR" id="H97341">
    <property type="entry name" value="H97341"/>
</dbReference>
<dbReference type="RefSeq" id="NP_350183.1">
    <property type="nucleotide sequence ID" value="NC_003030.1"/>
</dbReference>
<dbReference type="SMR" id="Q97D80"/>
<dbReference type="STRING" id="272562.CA_C3600"/>
<dbReference type="KEGG" id="cac:CA_C3600"/>
<dbReference type="PATRIC" id="fig|272562.8.peg.3790"/>
<dbReference type="eggNOG" id="COG0329">
    <property type="taxonomic scope" value="Bacteria"/>
</dbReference>
<dbReference type="HOGENOM" id="CLU_049343_7_1_9"/>
<dbReference type="OrthoDB" id="9782828at2"/>
<dbReference type="UniPathway" id="UPA00034">
    <property type="reaction ID" value="UER00017"/>
</dbReference>
<dbReference type="Proteomes" id="UP000000814">
    <property type="component" value="Chromosome"/>
</dbReference>
<dbReference type="GO" id="GO:0005829">
    <property type="term" value="C:cytosol"/>
    <property type="evidence" value="ECO:0007669"/>
    <property type="project" value="TreeGrafter"/>
</dbReference>
<dbReference type="GO" id="GO:0008840">
    <property type="term" value="F:4-hydroxy-tetrahydrodipicolinate synthase activity"/>
    <property type="evidence" value="ECO:0007669"/>
    <property type="project" value="UniProtKB-UniRule"/>
</dbReference>
<dbReference type="GO" id="GO:0019877">
    <property type="term" value="P:diaminopimelate biosynthetic process"/>
    <property type="evidence" value="ECO:0007669"/>
    <property type="project" value="UniProtKB-UniRule"/>
</dbReference>
<dbReference type="GO" id="GO:0009089">
    <property type="term" value="P:lysine biosynthetic process via diaminopimelate"/>
    <property type="evidence" value="ECO:0007669"/>
    <property type="project" value="UniProtKB-UniRule"/>
</dbReference>
<dbReference type="CDD" id="cd00950">
    <property type="entry name" value="DHDPS"/>
    <property type="match status" value="1"/>
</dbReference>
<dbReference type="Gene3D" id="3.20.20.70">
    <property type="entry name" value="Aldolase class I"/>
    <property type="match status" value="1"/>
</dbReference>
<dbReference type="HAMAP" id="MF_00418">
    <property type="entry name" value="DapA"/>
    <property type="match status" value="1"/>
</dbReference>
<dbReference type="InterPro" id="IPR013785">
    <property type="entry name" value="Aldolase_TIM"/>
</dbReference>
<dbReference type="InterPro" id="IPR005263">
    <property type="entry name" value="DapA"/>
</dbReference>
<dbReference type="InterPro" id="IPR002220">
    <property type="entry name" value="DapA-like"/>
</dbReference>
<dbReference type="InterPro" id="IPR020625">
    <property type="entry name" value="Schiff_base-form_aldolases_AS"/>
</dbReference>
<dbReference type="NCBIfam" id="TIGR00674">
    <property type="entry name" value="dapA"/>
    <property type="match status" value="1"/>
</dbReference>
<dbReference type="PANTHER" id="PTHR12128:SF66">
    <property type="entry name" value="4-HYDROXY-2-OXOGLUTARATE ALDOLASE, MITOCHONDRIAL"/>
    <property type="match status" value="1"/>
</dbReference>
<dbReference type="PANTHER" id="PTHR12128">
    <property type="entry name" value="DIHYDRODIPICOLINATE SYNTHASE"/>
    <property type="match status" value="1"/>
</dbReference>
<dbReference type="Pfam" id="PF00701">
    <property type="entry name" value="DHDPS"/>
    <property type="match status" value="1"/>
</dbReference>
<dbReference type="PIRSF" id="PIRSF001365">
    <property type="entry name" value="DHDPS"/>
    <property type="match status" value="1"/>
</dbReference>
<dbReference type="PRINTS" id="PR00146">
    <property type="entry name" value="DHPICSNTHASE"/>
</dbReference>
<dbReference type="SMART" id="SM01130">
    <property type="entry name" value="DHDPS"/>
    <property type="match status" value="1"/>
</dbReference>
<dbReference type="SUPFAM" id="SSF51569">
    <property type="entry name" value="Aldolase"/>
    <property type="match status" value="1"/>
</dbReference>
<dbReference type="PROSITE" id="PS00666">
    <property type="entry name" value="DHDPS_2"/>
    <property type="match status" value="1"/>
</dbReference>
<evidence type="ECO:0000255" key="1">
    <source>
        <dbReference type="HAMAP-Rule" id="MF_00418"/>
    </source>
</evidence>
<evidence type="ECO:0000305" key="2"/>
<feature type="chain" id="PRO_0000103104" description="4-hydroxy-tetrahydrodipicolinate synthase 2">
    <location>
        <begin position="1"/>
        <end position="286"/>
    </location>
</feature>
<feature type="active site" description="Proton donor/acceptor" evidence="1">
    <location>
        <position position="133"/>
    </location>
</feature>
<feature type="active site" description="Schiff-base intermediate with substrate" evidence="1">
    <location>
        <position position="161"/>
    </location>
</feature>
<feature type="binding site" evidence="1">
    <location>
        <position position="45"/>
    </location>
    <ligand>
        <name>pyruvate</name>
        <dbReference type="ChEBI" id="CHEBI:15361"/>
    </ligand>
</feature>
<feature type="binding site" evidence="1">
    <location>
        <position position="203"/>
    </location>
    <ligand>
        <name>pyruvate</name>
        <dbReference type="ChEBI" id="CHEBI:15361"/>
    </ligand>
</feature>
<feature type="site" description="Part of a proton relay during catalysis" evidence="1">
    <location>
        <position position="44"/>
    </location>
</feature>
<feature type="site" description="Part of a proton relay during catalysis" evidence="1">
    <location>
        <position position="107"/>
    </location>
</feature>
<organism>
    <name type="scientific">Clostridium acetobutylicum (strain ATCC 824 / DSM 792 / JCM 1419 / IAM 19013 / LMG 5710 / NBRC 13948 / NRRL B-527 / VKM B-1787 / 2291 / W)</name>
    <dbReference type="NCBI Taxonomy" id="272562"/>
    <lineage>
        <taxon>Bacteria</taxon>
        <taxon>Bacillati</taxon>
        <taxon>Bacillota</taxon>
        <taxon>Clostridia</taxon>
        <taxon>Eubacteriales</taxon>
        <taxon>Clostridiaceae</taxon>
        <taxon>Clostridium</taxon>
    </lineage>
</organism>
<proteinExistence type="inferred from homology"/>
<protein>
    <recommendedName>
        <fullName evidence="1">4-hydroxy-tetrahydrodipicolinate synthase 2</fullName>
        <shortName evidence="1">HTPA synthase 2</shortName>
        <ecNumber evidence="1">4.3.3.7</ecNumber>
    </recommendedName>
</protein>
<accession>Q97D80</accession>